<proteinExistence type="evidence at protein level"/>
<dbReference type="EMBL" id="AY070774">
    <property type="protein sequence ID" value="AAL59882.1"/>
    <property type="molecule type" value="mRNA"/>
</dbReference>
<dbReference type="EMBL" id="AB522904">
    <property type="protein sequence ID" value="BAK79010.1"/>
    <property type="molecule type" value="mRNA"/>
</dbReference>
<dbReference type="EMBL" id="AK021918">
    <property type="protein sequence ID" value="BAB13936.1"/>
    <property type="molecule type" value="mRNA"/>
</dbReference>
<dbReference type="EMBL" id="AK027888">
    <property type="protein sequence ID" value="BAB55433.1"/>
    <property type="molecule type" value="mRNA"/>
</dbReference>
<dbReference type="EMBL" id="AK291581">
    <property type="protein sequence ID" value="BAF84270.1"/>
    <property type="molecule type" value="mRNA"/>
</dbReference>
<dbReference type="EMBL" id="AF205589">
    <property type="status" value="NOT_ANNOTATED_CDS"/>
    <property type="molecule type" value="Genomic_DNA"/>
</dbReference>
<dbReference type="EMBL" id="CH471162">
    <property type="protein sequence ID" value="EAW82115.1"/>
    <property type="molecule type" value="Genomic_DNA"/>
</dbReference>
<dbReference type="EMBL" id="CH471162">
    <property type="protein sequence ID" value="EAW82116.1"/>
    <property type="molecule type" value="Genomic_DNA"/>
</dbReference>
<dbReference type="EMBL" id="BC002917">
    <property type="protein sequence ID" value="AAH02917.1"/>
    <property type="molecule type" value="mRNA"/>
</dbReference>
<dbReference type="CCDS" id="CCDS6423.1"/>
<dbReference type="RefSeq" id="NP_001240744.1">
    <property type="nucleotide sequence ID" value="NM_001253815.2"/>
</dbReference>
<dbReference type="RefSeq" id="NP_001240745.1">
    <property type="nucleotide sequence ID" value="NM_001253816.2"/>
</dbReference>
<dbReference type="RefSeq" id="NP_001350047.1">
    <property type="nucleotide sequence ID" value="NM_001363118.2"/>
</dbReference>
<dbReference type="RefSeq" id="NP_001350049.1">
    <property type="nucleotide sequence ID" value="NM_001363120.2"/>
</dbReference>
<dbReference type="RefSeq" id="NP_001350050.1">
    <property type="nucleotide sequence ID" value="NM_001363121.2"/>
</dbReference>
<dbReference type="RefSeq" id="NP_078807.1">
    <property type="nucleotide sequence ID" value="NM_024531.5"/>
</dbReference>
<dbReference type="RefSeq" id="XP_006716721.1">
    <property type="nucleotide sequence ID" value="XM_006716658.2"/>
</dbReference>
<dbReference type="RefSeq" id="XP_006716722.1">
    <property type="nucleotide sequence ID" value="XM_006716659.2"/>
</dbReference>
<dbReference type="RefSeq" id="XP_006716723.1">
    <property type="nucleotide sequence ID" value="XM_006716660.2"/>
</dbReference>
<dbReference type="RefSeq" id="XP_016869308.1">
    <property type="nucleotide sequence ID" value="XM_017013819.1"/>
</dbReference>
<dbReference type="RefSeq" id="XP_016869309.1">
    <property type="nucleotide sequence ID" value="XM_017013820.1"/>
</dbReference>
<dbReference type="RefSeq" id="XP_047278169.1">
    <property type="nucleotide sequence ID" value="XM_047422213.1"/>
</dbReference>
<dbReference type="RefSeq" id="XP_047278170.1">
    <property type="nucleotide sequence ID" value="XM_047422214.1"/>
</dbReference>
<dbReference type="RefSeq" id="XP_047278171.1">
    <property type="nucleotide sequence ID" value="XM_047422215.1"/>
</dbReference>
<dbReference type="RefSeq" id="XP_054188178.1">
    <property type="nucleotide sequence ID" value="XM_054332203.1"/>
</dbReference>
<dbReference type="RefSeq" id="XP_054188179.1">
    <property type="nucleotide sequence ID" value="XM_054332204.1"/>
</dbReference>
<dbReference type="RefSeq" id="XP_054188180.1">
    <property type="nucleotide sequence ID" value="XM_054332205.1"/>
</dbReference>
<dbReference type="RefSeq" id="XP_054217171.1">
    <property type="nucleotide sequence ID" value="XM_054361196.1"/>
</dbReference>
<dbReference type="RefSeq" id="XP_054217172.1">
    <property type="nucleotide sequence ID" value="XM_054361197.1"/>
</dbReference>
<dbReference type="RefSeq" id="XP_054217173.1">
    <property type="nucleotide sequence ID" value="XM_054361198.1"/>
</dbReference>
<dbReference type="PDB" id="8XSM">
    <property type="method" value="EM"/>
    <property type="resolution" value="3.01 A"/>
    <property type="chains" value="A=1-445"/>
</dbReference>
<dbReference type="PDBsum" id="8XSM"/>
<dbReference type="EMDB" id="EMD-38622"/>
<dbReference type="SMR" id="Q9HAB3"/>
<dbReference type="BioGRID" id="122725">
    <property type="interactions" value="15"/>
</dbReference>
<dbReference type="FunCoup" id="Q9HAB3">
    <property type="interactions" value="534"/>
</dbReference>
<dbReference type="IntAct" id="Q9HAB3">
    <property type="interactions" value="7"/>
</dbReference>
<dbReference type="MINT" id="Q9HAB3"/>
<dbReference type="STRING" id="9606.ENSP00000496184"/>
<dbReference type="DrugBank" id="DB01440">
    <property type="generic name" value="gamma-Hydroxybutyric acid"/>
</dbReference>
<dbReference type="DrugBank" id="DB09072">
    <property type="generic name" value="Sodium oxybate"/>
</dbReference>
<dbReference type="TCDB" id="2.A.125.1.3">
    <property type="family name" value="the eukaryotic riboflavin transporter (e-rft) family"/>
</dbReference>
<dbReference type="GlyCosmos" id="Q9HAB3">
    <property type="glycosylation" value="1 site, 2 glycans"/>
</dbReference>
<dbReference type="GlyGen" id="Q9HAB3">
    <property type="glycosylation" value="3 sites, 2 O-linked glycans (1 site)"/>
</dbReference>
<dbReference type="iPTMnet" id="Q9HAB3"/>
<dbReference type="PhosphoSitePlus" id="Q9HAB3"/>
<dbReference type="SwissPalm" id="Q9HAB3"/>
<dbReference type="BioMuta" id="SLC52A2"/>
<dbReference type="DMDM" id="74734171"/>
<dbReference type="jPOST" id="Q9HAB3"/>
<dbReference type="MassIVE" id="Q9HAB3"/>
<dbReference type="PaxDb" id="9606-ENSP00000436768"/>
<dbReference type="PeptideAtlas" id="Q9HAB3"/>
<dbReference type="ProteomicsDB" id="81389"/>
<dbReference type="Pumba" id="Q9HAB3"/>
<dbReference type="Antibodypedia" id="67476">
    <property type="antibodies" value="85 antibodies from 18 providers"/>
</dbReference>
<dbReference type="DNASU" id="79581"/>
<dbReference type="Ensembl" id="ENST00000329994.7">
    <property type="protein sequence ID" value="ENSP00000333638.2"/>
    <property type="gene ID" value="ENSG00000185803.12"/>
</dbReference>
<dbReference type="Ensembl" id="ENST00000402965.5">
    <property type="protein sequence ID" value="ENSP00000385961.1"/>
    <property type="gene ID" value="ENSG00000185803.12"/>
</dbReference>
<dbReference type="Ensembl" id="ENST00000527078.6">
    <property type="protein sequence ID" value="ENSP00000434728.1"/>
    <property type="gene ID" value="ENSG00000185803.12"/>
</dbReference>
<dbReference type="Ensembl" id="ENST00000530047.5">
    <property type="protein sequence ID" value="ENSP00000435820.1"/>
    <property type="gene ID" value="ENSG00000185803.12"/>
</dbReference>
<dbReference type="Ensembl" id="ENST00000532815.2">
    <property type="protein sequence ID" value="ENSP00000501933.1"/>
    <property type="gene ID" value="ENSG00000185803.12"/>
</dbReference>
<dbReference type="Ensembl" id="ENST00000533662.2">
    <property type="protein sequence ID" value="ENSP00000502274.1"/>
    <property type="gene ID" value="ENSG00000185803.12"/>
</dbReference>
<dbReference type="Ensembl" id="ENST00000534725.6">
    <property type="protein sequence ID" value="ENSP00000431965.2"/>
    <property type="gene ID" value="ENSG00000185803.12"/>
</dbReference>
<dbReference type="Ensembl" id="ENST00000643944.2">
    <property type="protein sequence ID" value="ENSP00000496184.2"/>
    <property type="gene ID" value="ENSG00000185803.12"/>
</dbReference>
<dbReference type="Ensembl" id="ENST00000674870.1">
    <property type="protein sequence ID" value="ENSP00000502406.1"/>
    <property type="gene ID" value="ENSG00000185803.12"/>
</dbReference>
<dbReference type="Ensembl" id="ENST00000675121.1">
    <property type="protein sequence ID" value="ENSP00000501993.1"/>
    <property type="gene ID" value="ENSG00000185803.12"/>
</dbReference>
<dbReference type="Ensembl" id="ENST00000675280.1">
    <property type="protein sequence ID" value="ENSP00000502796.1"/>
    <property type="gene ID" value="ENSG00000185803.12"/>
</dbReference>
<dbReference type="Ensembl" id="ENST00000675292.1">
    <property type="protein sequence ID" value="ENSP00000502652.1"/>
    <property type="gene ID" value="ENSG00000185803.12"/>
</dbReference>
<dbReference type="Ensembl" id="ENST00000675888.1">
    <property type="protein sequence ID" value="ENSP00000502294.1"/>
    <property type="gene ID" value="ENSG00000185803.12"/>
</dbReference>
<dbReference type="Ensembl" id="ENST00000710449.1">
    <property type="protein sequence ID" value="ENSP00000518278.1"/>
    <property type="gene ID" value="ENSG00000285112.5"/>
</dbReference>
<dbReference type="Ensembl" id="ENST00000710451.1">
    <property type="protein sequence ID" value="ENSP00000518280.1"/>
    <property type="gene ID" value="ENSG00000285112.5"/>
</dbReference>
<dbReference type="Ensembl" id="ENST00000710453.1">
    <property type="protein sequence ID" value="ENSP00000518281.1"/>
    <property type="gene ID" value="ENSG00000285112.5"/>
</dbReference>
<dbReference type="Ensembl" id="ENST00000710454.1">
    <property type="protein sequence ID" value="ENSP00000518282.1"/>
    <property type="gene ID" value="ENSG00000285112.5"/>
</dbReference>
<dbReference type="Ensembl" id="ENST00000710455.1">
    <property type="protein sequence ID" value="ENSP00000518283.1"/>
    <property type="gene ID" value="ENSG00000285112.5"/>
</dbReference>
<dbReference type="Ensembl" id="ENST00000710456.1">
    <property type="protein sequence ID" value="ENSP00000518284.1"/>
    <property type="gene ID" value="ENSG00000285112.5"/>
</dbReference>
<dbReference type="Ensembl" id="ENST00000710458.1">
    <property type="protein sequence ID" value="ENSP00000518286.1"/>
    <property type="gene ID" value="ENSG00000285112.5"/>
</dbReference>
<dbReference type="Ensembl" id="ENST00000710459.1">
    <property type="protein sequence ID" value="ENSP00000518287.1"/>
    <property type="gene ID" value="ENSG00000285112.5"/>
</dbReference>
<dbReference type="Ensembl" id="ENST00000710461.1">
    <property type="protein sequence ID" value="ENSP00000518289.1"/>
    <property type="gene ID" value="ENSG00000285112.5"/>
</dbReference>
<dbReference type="Ensembl" id="ENST00000710462.1">
    <property type="protein sequence ID" value="ENSP00000518290.1"/>
    <property type="gene ID" value="ENSG00000285112.5"/>
</dbReference>
<dbReference type="Ensembl" id="ENST00000710465.1">
    <property type="protein sequence ID" value="ENSP00000518293.1"/>
    <property type="gene ID" value="ENSG00000285112.5"/>
</dbReference>
<dbReference type="Ensembl" id="ENST00000710466.1">
    <property type="protein sequence ID" value="ENSP00000518294.1"/>
    <property type="gene ID" value="ENSG00000285112.5"/>
</dbReference>
<dbReference type="Ensembl" id="ENST00000710468.1">
    <property type="protein sequence ID" value="ENSP00000518296.1"/>
    <property type="gene ID" value="ENSG00000285112.5"/>
</dbReference>
<dbReference type="GeneID" id="79581"/>
<dbReference type="KEGG" id="hsa:79581"/>
<dbReference type="MANE-Select" id="ENST00000643944.2">
    <property type="protein sequence ID" value="ENSP00000496184.2"/>
    <property type="RefSeq nucleotide sequence ID" value="NM_001363118.2"/>
    <property type="RefSeq protein sequence ID" value="NP_001350047.1"/>
</dbReference>
<dbReference type="UCSC" id="uc003zcc.4">
    <property type="organism name" value="human"/>
</dbReference>
<dbReference type="AGR" id="HGNC:30224"/>
<dbReference type="CTD" id="79581"/>
<dbReference type="DisGeNET" id="79581"/>
<dbReference type="GeneCards" id="SLC52A2"/>
<dbReference type="GeneReviews" id="SLC52A2"/>
<dbReference type="HGNC" id="HGNC:30224">
    <property type="gene designation" value="SLC52A2"/>
</dbReference>
<dbReference type="HPA" id="ENSG00000185803">
    <property type="expression patterns" value="Low tissue specificity"/>
</dbReference>
<dbReference type="MalaCards" id="SLC52A2"/>
<dbReference type="MIM" id="607882">
    <property type="type" value="gene"/>
</dbReference>
<dbReference type="MIM" id="614707">
    <property type="type" value="phenotype"/>
</dbReference>
<dbReference type="neXtProt" id="NX_Q9HAB3"/>
<dbReference type="OpenTargets" id="ENSG00000185803"/>
<dbReference type="Orphanet" id="572543">
    <property type="disease" value="RFVT2-related riboflavin transporter deficiency"/>
</dbReference>
<dbReference type="PharmGKB" id="PA134982935"/>
<dbReference type="VEuPathDB" id="HostDB:ENSG00000185803"/>
<dbReference type="eggNOG" id="KOG4255">
    <property type="taxonomic scope" value="Eukaryota"/>
</dbReference>
<dbReference type="GeneTree" id="ENSGT00390000003774"/>
<dbReference type="HOGENOM" id="CLU_034789_1_0_1"/>
<dbReference type="InParanoid" id="Q9HAB3"/>
<dbReference type="OMA" id="NLIMLAW"/>
<dbReference type="OrthoDB" id="9995836at2759"/>
<dbReference type="PAN-GO" id="Q9HAB3">
    <property type="GO annotations" value="3 GO annotations based on evolutionary models"/>
</dbReference>
<dbReference type="PhylomeDB" id="Q9HAB3"/>
<dbReference type="TreeFam" id="TF314820"/>
<dbReference type="PathwayCommons" id="Q9HAB3"/>
<dbReference type="Reactome" id="R-HSA-196843">
    <property type="pathway name" value="Vitamin B2 (riboflavin) metabolism"/>
</dbReference>
<dbReference type="SignaLink" id="Q9HAB3"/>
<dbReference type="BioGRID-ORCS" id="79581">
    <property type="hits" value="36 hits in 1157 CRISPR screens"/>
</dbReference>
<dbReference type="ChiTaRS" id="SLC52A2">
    <property type="organism name" value="human"/>
</dbReference>
<dbReference type="GenomeRNAi" id="79581"/>
<dbReference type="Pharos" id="Q9HAB3">
    <property type="development level" value="Tbio"/>
</dbReference>
<dbReference type="PRO" id="PR:Q9HAB3"/>
<dbReference type="Proteomes" id="UP000005640">
    <property type="component" value="Chromosome 8"/>
</dbReference>
<dbReference type="RNAct" id="Q9HAB3">
    <property type="molecule type" value="protein"/>
</dbReference>
<dbReference type="Bgee" id="ENSG00000185803">
    <property type="expression patterns" value="Expressed in mucosa of transverse colon and 95 other cell types or tissues"/>
</dbReference>
<dbReference type="ExpressionAtlas" id="Q9HAB3">
    <property type="expression patterns" value="baseline and differential"/>
</dbReference>
<dbReference type="GO" id="GO:0005886">
    <property type="term" value="C:plasma membrane"/>
    <property type="evidence" value="ECO:0000314"/>
    <property type="project" value="UniProtKB"/>
</dbReference>
<dbReference type="GO" id="GO:0062124">
    <property type="term" value="F:4-hydroxybutyrate receptor activity"/>
    <property type="evidence" value="ECO:0000314"/>
    <property type="project" value="UniProtKB"/>
</dbReference>
<dbReference type="GO" id="GO:0032217">
    <property type="term" value="F:riboflavin transmembrane transporter activity"/>
    <property type="evidence" value="ECO:0000314"/>
    <property type="project" value="UniProtKB"/>
</dbReference>
<dbReference type="GO" id="GO:0001618">
    <property type="term" value="F:virus receptor activity"/>
    <property type="evidence" value="ECO:0007669"/>
    <property type="project" value="UniProtKB-KW"/>
</dbReference>
<dbReference type="GO" id="GO:0006771">
    <property type="term" value="P:riboflavin metabolic process"/>
    <property type="evidence" value="ECO:0000304"/>
    <property type="project" value="Reactome"/>
</dbReference>
<dbReference type="GO" id="GO:0032218">
    <property type="term" value="P:riboflavin transport"/>
    <property type="evidence" value="ECO:0000314"/>
    <property type="project" value="UniProtKB"/>
</dbReference>
<dbReference type="InterPro" id="IPR009357">
    <property type="entry name" value="Riboflavin_transptr"/>
</dbReference>
<dbReference type="PANTHER" id="PTHR12929">
    <property type="entry name" value="SOLUTE CARRIER FAMILY 52"/>
    <property type="match status" value="1"/>
</dbReference>
<dbReference type="PANTHER" id="PTHR12929:SF1">
    <property type="entry name" value="SOLUTE CARRIER FAMILY 52, RIBOFLAVIN TRANSPORTER, MEMBER 2"/>
    <property type="match status" value="1"/>
</dbReference>
<dbReference type="Pfam" id="PF06237">
    <property type="entry name" value="SLC52_ribofla_tr"/>
    <property type="match status" value="1"/>
</dbReference>
<sequence>MAAPTPARPVLTHLLVALFGMGSWAAVNGIWVELPVVVKELPEGWSLPSYVSVLVALGNLGLLVVTLWRRLAPGKDEQVPIRVVQVLGMVGTALLASLWHHVAPVAGQLHSVAFLALAFVLALACCASNVTFLPFLSHLPPRFLRSFFLGQGLSALLPCVLALVQGVGRLECPPAPINGTPGPPLDFLERFPASTFFWALTALLVASAAAFQGLLLLLPPPPSVPTGELGSGLQVGAPGAEEEVEESSPLQEPPSQAAGTTPGPDPKAYQLLSARSACLLGLLAATNALTNGVLPAVQSFSCLPYGRLAYHLAVVLGSAANPLACFLAMGVLCRSLAGLGGLSLLGVFCGGYLMALAVLSPCPPLVGTSAGVVLVVLSWVLCLGVFSYVKVAASSLLHGGGRPALLAAGVAIQVGSLLGAVAMFPPTSIYHVFHSRKDCADPCDS</sequence>
<gene>
    <name type="primary">SLC52A2</name>
    <name type="synonym">GPR172A</name>
    <name type="synonym">PAR1</name>
    <name type="synonym">RFT3</name>
</gene>
<comment type="function">
    <text evidence="6 8 9 10 11 13 15">Plasma membrane transporter mediating the uptake by cells of the water soluble vitamin B2/riboflavin that plays a key role in biochemical oxidation-reduction reactions of the carbohydrate, lipid, and amino acid metabolism (PubMed:20463145, PubMed:22864630, PubMed:23243084, PubMed:24253200, PubMed:27702554). Humans are unable to synthesize vitamin B2/riboflavin and must obtain it via intestinal absorption (PubMed:20463145). May also act as a receptor for 4-hydroxybutyrate (Probable).</text>
</comment>
<comment type="function">
    <text evidence="3 5">(Microbial infection) In case of infection by retroviruses, acts as a cell receptor to retroviral envelopes similar to the porcine endogenous retrovirus (PERV-A).</text>
</comment>
<comment type="catalytic activity">
    <reaction evidence="6 8 9 10 11">
        <text>riboflavin(in) = riboflavin(out)</text>
        <dbReference type="Rhea" id="RHEA:35015"/>
        <dbReference type="ChEBI" id="CHEBI:57986"/>
    </reaction>
</comment>
<comment type="activity regulation">
    <text evidence="6">Riboflavin transport is Na(+)-independent but moderately pH-sensitive (PubMed:20463145). Activity is strongly inhibited by riboflavin analogs, such as lumiflavin (PubMed:20463145). Weakly inhibited by flavin adenine dinucleotide (FAD) and flavin mononucleotide (FMN) (PubMed:20463145).</text>
</comment>
<comment type="biophysicochemical properties">
    <kinetics>
        <KM evidence="6">0.33 uM for riboflavin</KM>
    </kinetics>
</comment>
<comment type="interaction">
    <interactant intactId="EBI-10309896">
        <id>Q9HAB3</id>
    </interactant>
    <interactant intactId="EBI-396137">
        <id>Q9UJX2</id>
        <label>CDC23</label>
    </interactant>
    <organismsDiffer>false</organismsDiffer>
    <experiments>3</experiments>
</comment>
<comment type="interaction">
    <interactant intactId="EBI-10309896">
        <id>Q9HAB3</id>
    </interactant>
    <interactant intactId="EBI-18304435">
        <id>Q5JX71</id>
        <label>FAM209A</label>
    </interactant>
    <organismsDiffer>false</organismsDiffer>
    <experiments>3</experiments>
</comment>
<comment type="subcellular location">
    <subcellularLocation>
        <location evidence="4 6 10 11">Cell membrane</location>
        <topology evidence="1">Multi-pass membrane protein</topology>
    </subcellularLocation>
</comment>
<comment type="tissue specificity">
    <text evidence="3 6">Highly expressed in brain, fetal brain and salivary gland. Weakly expressed in other tissues.</text>
</comment>
<comment type="disease" evidence="7 8 9 10 11">
    <disease id="DI-03494">
        <name>Brown-Vialetto-Van Laere syndrome 2</name>
        <acronym>BVVLS2</acronym>
        <description>An autosomal recessive progressive neurologic disorder characterized by early childhood onset of sensorineural deafness, bulbar dysfunction, and severe diffuse muscle weakness and wasting resulting in respiratory insufficiency and loss of independent ambulation. Because it results from a defect in riboflavin metabolism, some patients may benefit from high-dose riboflavin supplementation.</description>
        <dbReference type="MIM" id="614707"/>
    </disease>
    <text>The disease is caused by variants affecting the gene represented in this entry.</text>
</comment>
<comment type="similarity">
    <text evidence="14">Belongs to the riboflavin transporter family.</text>
</comment>
<organism>
    <name type="scientific">Homo sapiens</name>
    <name type="common">Human</name>
    <dbReference type="NCBI Taxonomy" id="9606"/>
    <lineage>
        <taxon>Eukaryota</taxon>
        <taxon>Metazoa</taxon>
        <taxon>Chordata</taxon>
        <taxon>Craniata</taxon>
        <taxon>Vertebrata</taxon>
        <taxon>Euteleostomi</taxon>
        <taxon>Mammalia</taxon>
        <taxon>Eutheria</taxon>
        <taxon>Euarchontoglires</taxon>
        <taxon>Primates</taxon>
        <taxon>Haplorrhini</taxon>
        <taxon>Catarrhini</taxon>
        <taxon>Hominidae</taxon>
        <taxon>Homo</taxon>
    </lineage>
</organism>
<reference key="1">
    <citation type="journal article" date="2003" name="Proc. Natl. Acad. Sci. U.S.A.">
        <title>Identification of receptors for pig endogenous retrovirus.</title>
        <authorList>
            <person name="Ericsson T.A."/>
            <person name="Takeuchi Y."/>
            <person name="Templin C."/>
            <person name="Quinn G."/>
            <person name="Farhadian S.F."/>
            <person name="Wood J.C."/>
            <person name="Oldmixon B.A."/>
            <person name="Suling K.M."/>
            <person name="Ishii J.K."/>
            <person name="Kitagawa Y."/>
            <person name="Miyazawa T."/>
            <person name="Salomon D.R."/>
            <person name="Weiss R.A."/>
            <person name="Patience C."/>
        </authorList>
    </citation>
    <scope>NUCLEOTIDE SEQUENCE [MRNA]</scope>
    <scope>TISSUE SPECIFICITY</scope>
    <scope>FUNCTION AS A VIRAL RECEPTOR (MICROBIAL INFECTION)</scope>
</reference>
<reference key="2">
    <citation type="journal article" date="2010" name="J. Nutr.">
        <title>Identification and comparative functional characterization of a new human riboflavin transporter hRFT3 expressed in the brain.</title>
        <authorList>
            <person name="Yao Y."/>
            <person name="Yonezawa A."/>
            <person name="Yoshimatsu H."/>
            <person name="Masuda S."/>
            <person name="Katsura T."/>
            <person name="Inui K."/>
        </authorList>
    </citation>
    <scope>NUCLEOTIDE SEQUENCE [MRNA]</scope>
    <scope>FUNCTION</scope>
    <scope>TRANSPORTER ACTIVITY</scope>
    <scope>SUBCELLULAR LOCATION</scope>
    <scope>TISSUE SPECIFICITY</scope>
    <scope>BIOPHYSICOCHEMICAL PROPERTIES</scope>
</reference>
<reference key="3">
    <citation type="journal article" date="2004" name="Nat. Genet.">
        <title>Complete sequencing and characterization of 21,243 full-length human cDNAs.</title>
        <authorList>
            <person name="Ota T."/>
            <person name="Suzuki Y."/>
            <person name="Nishikawa T."/>
            <person name="Otsuki T."/>
            <person name="Sugiyama T."/>
            <person name="Irie R."/>
            <person name="Wakamatsu A."/>
            <person name="Hayashi K."/>
            <person name="Sato H."/>
            <person name="Nagai K."/>
            <person name="Kimura K."/>
            <person name="Makita H."/>
            <person name="Sekine M."/>
            <person name="Obayashi M."/>
            <person name="Nishi T."/>
            <person name="Shibahara T."/>
            <person name="Tanaka T."/>
            <person name="Ishii S."/>
            <person name="Yamamoto J."/>
            <person name="Saito K."/>
            <person name="Kawai Y."/>
            <person name="Isono Y."/>
            <person name="Nakamura Y."/>
            <person name="Nagahari K."/>
            <person name="Murakami K."/>
            <person name="Yasuda T."/>
            <person name="Iwayanagi T."/>
            <person name="Wagatsuma M."/>
            <person name="Shiratori A."/>
            <person name="Sudo H."/>
            <person name="Hosoiri T."/>
            <person name="Kaku Y."/>
            <person name="Kodaira H."/>
            <person name="Kondo H."/>
            <person name="Sugawara M."/>
            <person name="Takahashi M."/>
            <person name="Kanda K."/>
            <person name="Yokoi T."/>
            <person name="Furuya T."/>
            <person name="Kikkawa E."/>
            <person name="Omura Y."/>
            <person name="Abe K."/>
            <person name="Kamihara K."/>
            <person name="Katsuta N."/>
            <person name="Sato K."/>
            <person name="Tanikawa M."/>
            <person name="Yamazaki M."/>
            <person name="Ninomiya K."/>
            <person name="Ishibashi T."/>
            <person name="Yamashita H."/>
            <person name="Murakawa K."/>
            <person name="Fujimori K."/>
            <person name="Tanai H."/>
            <person name="Kimata M."/>
            <person name="Watanabe M."/>
            <person name="Hiraoka S."/>
            <person name="Chiba Y."/>
            <person name="Ishida S."/>
            <person name="Ono Y."/>
            <person name="Takiguchi S."/>
            <person name="Watanabe S."/>
            <person name="Yosida M."/>
            <person name="Hotuta T."/>
            <person name="Kusano J."/>
            <person name="Kanehori K."/>
            <person name="Takahashi-Fujii A."/>
            <person name="Hara H."/>
            <person name="Tanase T.-O."/>
            <person name="Nomura Y."/>
            <person name="Togiya S."/>
            <person name="Komai F."/>
            <person name="Hara R."/>
            <person name="Takeuchi K."/>
            <person name="Arita M."/>
            <person name="Imose N."/>
            <person name="Musashino K."/>
            <person name="Yuuki H."/>
            <person name="Oshima A."/>
            <person name="Sasaki N."/>
            <person name="Aotsuka S."/>
            <person name="Yoshikawa Y."/>
            <person name="Matsunawa H."/>
            <person name="Ichihara T."/>
            <person name="Shiohata N."/>
            <person name="Sano S."/>
            <person name="Moriya S."/>
            <person name="Momiyama H."/>
            <person name="Satoh N."/>
            <person name="Takami S."/>
            <person name="Terashima Y."/>
            <person name="Suzuki O."/>
            <person name="Nakagawa S."/>
            <person name="Senoh A."/>
            <person name="Mizoguchi H."/>
            <person name="Goto Y."/>
            <person name="Shimizu F."/>
            <person name="Wakebe H."/>
            <person name="Hishigaki H."/>
            <person name="Watanabe T."/>
            <person name="Sugiyama A."/>
            <person name="Takemoto M."/>
            <person name="Kawakami B."/>
            <person name="Yamazaki M."/>
            <person name="Watanabe K."/>
            <person name="Kumagai A."/>
            <person name="Itakura S."/>
            <person name="Fukuzumi Y."/>
            <person name="Fujimori Y."/>
            <person name="Komiyama M."/>
            <person name="Tashiro H."/>
            <person name="Tanigami A."/>
            <person name="Fujiwara T."/>
            <person name="Ono T."/>
            <person name="Yamada K."/>
            <person name="Fujii Y."/>
            <person name="Ozaki K."/>
            <person name="Hirao M."/>
            <person name="Ohmori Y."/>
            <person name="Kawabata A."/>
            <person name="Hikiji T."/>
            <person name="Kobatake N."/>
            <person name="Inagaki H."/>
            <person name="Ikema Y."/>
            <person name="Okamoto S."/>
            <person name="Okitani R."/>
            <person name="Kawakami T."/>
            <person name="Noguchi S."/>
            <person name="Itoh T."/>
            <person name="Shigeta K."/>
            <person name="Senba T."/>
            <person name="Matsumura K."/>
            <person name="Nakajima Y."/>
            <person name="Mizuno T."/>
            <person name="Morinaga M."/>
            <person name="Sasaki M."/>
            <person name="Togashi T."/>
            <person name="Oyama M."/>
            <person name="Hata H."/>
            <person name="Watanabe M."/>
            <person name="Komatsu T."/>
            <person name="Mizushima-Sugano J."/>
            <person name="Satoh T."/>
            <person name="Shirai Y."/>
            <person name="Takahashi Y."/>
            <person name="Nakagawa K."/>
            <person name="Okumura K."/>
            <person name="Nagase T."/>
            <person name="Nomura N."/>
            <person name="Kikuchi H."/>
            <person name="Masuho Y."/>
            <person name="Yamashita R."/>
            <person name="Nakai K."/>
            <person name="Yada T."/>
            <person name="Nakamura Y."/>
            <person name="Ohara O."/>
            <person name="Isogai T."/>
            <person name="Sugano S."/>
        </authorList>
    </citation>
    <scope>NUCLEOTIDE SEQUENCE [LARGE SCALE MRNA]</scope>
    <source>
        <tissue>Embryo</tissue>
        <tissue>Placenta</tissue>
    </source>
</reference>
<reference key="4">
    <citation type="journal article" date="2006" name="Nature">
        <title>DNA sequence and analysis of human chromosome 8.</title>
        <authorList>
            <person name="Nusbaum C."/>
            <person name="Mikkelsen T.S."/>
            <person name="Zody M.C."/>
            <person name="Asakawa S."/>
            <person name="Taudien S."/>
            <person name="Garber M."/>
            <person name="Kodira C.D."/>
            <person name="Schueler M.G."/>
            <person name="Shimizu A."/>
            <person name="Whittaker C.A."/>
            <person name="Chang J.L."/>
            <person name="Cuomo C.A."/>
            <person name="Dewar K."/>
            <person name="FitzGerald M.G."/>
            <person name="Yang X."/>
            <person name="Allen N.R."/>
            <person name="Anderson S."/>
            <person name="Asakawa T."/>
            <person name="Blechschmidt K."/>
            <person name="Bloom T."/>
            <person name="Borowsky M.L."/>
            <person name="Butler J."/>
            <person name="Cook A."/>
            <person name="Corum B."/>
            <person name="DeArellano K."/>
            <person name="DeCaprio D."/>
            <person name="Dooley K.T."/>
            <person name="Dorris L. III"/>
            <person name="Engels R."/>
            <person name="Gloeckner G."/>
            <person name="Hafez N."/>
            <person name="Hagopian D.S."/>
            <person name="Hall J.L."/>
            <person name="Ishikawa S.K."/>
            <person name="Jaffe D.B."/>
            <person name="Kamat A."/>
            <person name="Kudoh J."/>
            <person name="Lehmann R."/>
            <person name="Lokitsang T."/>
            <person name="Macdonald P."/>
            <person name="Major J.E."/>
            <person name="Matthews C.D."/>
            <person name="Mauceli E."/>
            <person name="Menzel U."/>
            <person name="Mihalev A.H."/>
            <person name="Minoshima S."/>
            <person name="Murayama Y."/>
            <person name="Naylor J.W."/>
            <person name="Nicol R."/>
            <person name="Nguyen C."/>
            <person name="O'Leary S.B."/>
            <person name="O'Neill K."/>
            <person name="Parker S.C.J."/>
            <person name="Polley A."/>
            <person name="Raymond C.K."/>
            <person name="Reichwald K."/>
            <person name="Rodriguez J."/>
            <person name="Sasaki T."/>
            <person name="Schilhabel M."/>
            <person name="Siddiqui R."/>
            <person name="Smith C.L."/>
            <person name="Sneddon T.P."/>
            <person name="Talamas J.A."/>
            <person name="Tenzin P."/>
            <person name="Topham K."/>
            <person name="Venkataraman V."/>
            <person name="Wen G."/>
            <person name="Yamazaki S."/>
            <person name="Young S.K."/>
            <person name="Zeng Q."/>
            <person name="Zimmer A.R."/>
            <person name="Rosenthal A."/>
            <person name="Birren B.W."/>
            <person name="Platzer M."/>
            <person name="Shimizu N."/>
            <person name="Lander E.S."/>
        </authorList>
    </citation>
    <scope>NUCLEOTIDE SEQUENCE [LARGE SCALE GENOMIC DNA]</scope>
</reference>
<reference key="5">
    <citation type="submission" date="2005-09" db="EMBL/GenBank/DDBJ databases">
        <authorList>
            <person name="Mural R.J."/>
            <person name="Istrail S."/>
            <person name="Sutton G.G."/>
            <person name="Florea L."/>
            <person name="Halpern A.L."/>
            <person name="Mobarry C.M."/>
            <person name="Lippert R."/>
            <person name="Walenz B."/>
            <person name="Shatkay H."/>
            <person name="Dew I."/>
            <person name="Miller J.R."/>
            <person name="Flanigan M.J."/>
            <person name="Edwards N.J."/>
            <person name="Bolanos R."/>
            <person name="Fasulo D."/>
            <person name="Halldorsson B.V."/>
            <person name="Hannenhalli S."/>
            <person name="Turner R."/>
            <person name="Yooseph S."/>
            <person name="Lu F."/>
            <person name="Nusskern D.R."/>
            <person name="Shue B.C."/>
            <person name="Zheng X.H."/>
            <person name="Zhong F."/>
            <person name="Delcher A.L."/>
            <person name="Huson D.H."/>
            <person name="Kravitz S.A."/>
            <person name="Mouchard L."/>
            <person name="Reinert K."/>
            <person name="Remington K.A."/>
            <person name="Clark A.G."/>
            <person name="Waterman M.S."/>
            <person name="Eichler E.E."/>
            <person name="Adams M.D."/>
            <person name="Hunkapiller M.W."/>
            <person name="Myers E.W."/>
            <person name="Venter J.C."/>
        </authorList>
    </citation>
    <scope>NUCLEOTIDE SEQUENCE [LARGE SCALE GENOMIC DNA]</scope>
</reference>
<reference key="6">
    <citation type="journal article" date="2004" name="Genome Res.">
        <title>The status, quality, and expansion of the NIH full-length cDNA project: the Mammalian Gene Collection (MGC).</title>
        <authorList>
            <consortium name="The MGC Project Team"/>
        </authorList>
    </citation>
    <scope>NUCLEOTIDE SEQUENCE [LARGE SCALE MRNA]</scope>
    <source>
        <tissue>Skin</tissue>
    </source>
</reference>
<reference key="7">
    <citation type="journal article" date="2007" name="FASEB J.">
        <title>Cloning and functional characterization of a gamma-hydroxybutyrate receptor identified in the human brain.</title>
        <authorList>
            <person name="Andriamampandry C."/>
            <person name="Taleb O."/>
            <person name="Kemmel V."/>
            <person name="Humbert J.P."/>
            <person name="Aunis D."/>
            <person name="Maitre M."/>
        </authorList>
    </citation>
    <scope>FUNCTION</scope>
    <scope>SUBCELLULAR LOCATION</scope>
</reference>
<reference key="8">
    <citation type="journal article" date="2009" name="Proc. Natl. Acad. Sci. U.S.A.">
        <title>Single-round selection yields a unique retroviral envelope utilizing GPR172A as its host receptor.</title>
        <authorList>
            <person name="Mazari P.M."/>
            <person name="Linder-Basso D."/>
            <person name="Sarangi A."/>
            <person name="Chang Y."/>
            <person name="Roth M.J."/>
        </authorList>
    </citation>
    <scope>FUNCTION AS A VIRAL RECEPTOR (MICROBIAL INFECTION)</scope>
</reference>
<reference key="9">
    <citation type="journal article" date="2012" name="Brain">
        <title>Exome sequencing reveals riboflavin transporter mutations as a cause of motor neuron disease.</title>
        <authorList>
            <person name="Johnson J.O."/>
            <person name="Gibbs J.R."/>
            <person name="Megarbane A."/>
            <person name="Urtizberea J.A."/>
            <person name="Hernandez D.G."/>
            <person name="Foley A.R."/>
            <person name="Arepalli S."/>
            <person name="Pandraud A."/>
            <person name="Simon-Sanchez J."/>
            <person name="Clayton P."/>
            <person name="Reilly M.M."/>
            <person name="Muntoni F."/>
            <person name="Abramzon Y."/>
            <person name="Houlden H."/>
            <person name="Singleton A.B."/>
        </authorList>
    </citation>
    <scope>VARIANT BVVLS2 ARG-306</scope>
</reference>
<reference key="10">
    <citation type="journal article" date="2012" name="J. Inherit. Metab. Dis.">
        <title>Impaired riboflavin transport due to missense mutations in SLC52A2 causes Brown-Vialetto-Van Laere syndrome.</title>
        <authorList>
            <person name="Haack T.B."/>
            <person name="Makowski C."/>
            <person name="Yao Y."/>
            <person name="Graf E."/>
            <person name="Hempel M."/>
            <person name="Wieland T."/>
            <person name="Tauer U."/>
            <person name="Ahting U."/>
            <person name="Mayr J.A."/>
            <person name="Freisinger P."/>
            <person name="Yoshimatsu H."/>
            <person name="Inui K."/>
            <person name="Strom T.M."/>
            <person name="Meitinger T."/>
            <person name="Yonezawa A."/>
            <person name="Prokisch H."/>
        </authorList>
    </citation>
    <scope>VARIANTS BVVLS2 PRO-123 AND PRO-339</scope>
    <scope>CHARACTERIZATION OF VARIANTS BVVLS2 PRO-123 AND PRO-339</scope>
    <scope>FUNCTION</scope>
    <scope>TRANSPORTER ACTIVITY</scope>
</reference>
<reference key="11">
    <citation type="journal article" date="2013" name="J. Med. Genet.">
        <title>Riboflavin transporter 3 involvement in infantile Brown-Vialetto-Van Laere disease: two novel mutations.</title>
        <authorList>
            <person name="Ciccolella M."/>
            <person name="Corti S."/>
            <person name="Catteruccia M."/>
            <person name="Petrini S."/>
            <person name="Tozzi G."/>
            <person name="Rizza T."/>
            <person name="Carrozzo R."/>
            <person name="Nizzardo M."/>
            <person name="Bordoni A."/>
            <person name="Ronchi D."/>
            <person name="D'Amico A."/>
            <person name="Rizzo C."/>
            <person name="Comi G.P."/>
            <person name="Bertini E."/>
        </authorList>
    </citation>
    <scope>VARIANTS BVVLS2 PHE-52 AND SER-419</scope>
    <scope>CHARACTERIZATION OF VARIANTS BVVLS2 PHE-52 AND SER-419</scope>
    <scope>FUNCTION</scope>
    <scope>TRANSPORTER ACTIVITY</scope>
</reference>
<reference key="12">
    <citation type="journal article" date="2014" name="Brain">
        <title>Treatable childhood neuronopathy caused by mutations in riboflavin transporter RFVT2.</title>
        <authorList>
            <person name="Foley A.R."/>
            <person name="Menezes M.P."/>
            <person name="Pandraud A."/>
            <person name="Gonzalez M.A."/>
            <person name="Al-Odaib A."/>
            <person name="Abrams A.J."/>
            <person name="Sugano K."/>
            <person name="Yonezawa A."/>
            <person name="Manzur A.Y."/>
            <person name="Burns J."/>
            <person name="Hughes I."/>
            <person name="McCullagh B.G."/>
            <person name="Jungbluth H."/>
            <person name="Lim M.J."/>
            <person name="Lin J.P."/>
            <person name="Megarbane A."/>
            <person name="Urtizberea J.A."/>
            <person name="Shah A.H."/>
            <person name="Antony J."/>
            <person name="Webster R."/>
            <person name="Broomfield A."/>
            <person name="Ng J."/>
            <person name="Mathew A.A."/>
            <person name="O'Byrne J.J."/>
            <person name="Forman E."/>
            <person name="Scoto M."/>
            <person name="Prasad M."/>
            <person name="O'Brien K."/>
            <person name="Olpin S."/>
            <person name="Oppenheim M."/>
            <person name="Hargreaves I."/>
            <person name="Land J.M."/>
            <person name="Wang M.X."/>
            <person name="Carpenter K."/>
            <person name="Horvath R."/>
            <person name="Straub V."/>
            <person name="Lek M."/>
            <person name="Gold W."/>
            <person name="Farrell M.O."/>
            <person name="Brandner S."/>
            <person name="Phadke R."/>
            <person name="Matsubara K."/>
            <person name="McGarvey M.L."/>
            <person name="Scherer S.S."/>
            <person name="Baxter P.S."/>
            <person name="King M.D."/>
            <person name="Clayton P."/>
            <person name="Rahman S."/>
            <person name="Reilly M.M."/>
            <person name="Ouvrier R.A."/>
            <person name="Christodoulou J."/>
            <person name="Zuechner S."/>
            <person name="Muntoni F."/>
            <person name="Houlden H."/>
        </authorList>
    </citation>
    <scope>VARIANTS BVVLS2 SER-31; ASP-284; CYS-305; ARG-306; PRO-312 AND PRO-339</scope>
    <scope>CHARACTERIZATION OF VARIANTS BVVLS2 SER-31; ASP-284; CYS-305; ARG-306; PRO-312 AND PRO-339</scope>
    <scope>FUNCTION</scope>
    <scope>TRANSPORTER ACTIVITY</scope>
    <scope>SUBCELLULAR LOCATION</scope>
</reference>
<reference key="13">
    <citation type="journal article" date="2016" name="Clin. Chim. Acta">
        <title>SLC52A2 [p.P141T] and SLC52A3 [p.N21S] causing Brown-Vialetto-Van Laere syndrome in an Indian patient: First genetically proven case with mutations in two riboflavin transporters.</title>
        <authorList>
            <person name="Udhayabanu T."/>
            <person name="Subramanian V.S."/>
            <person name="Teafatiller T."/>
            <person name="Gowda V.K."/>
            <person name="Raghavan V.S."/>
            <person name="Varalakshmi P."/>
            <person name="Said H.M."/>
            <person name="Ashokkumar B."/>
        </authorList>
    </citation>
    <scope>VARIANT BVVLS2 THR-141</scope>
    <scope>CHARACTERIZATION OF VARIANT BVVLS2 THR-141</scope>
    <scope>FUNCTION</scope>
    <scope>TRANSPORTER ACTIVITY</scope>
    <scope>SUBCELLULAR LOCATION</scope>
</reference>
<feature type="chain" id="PRO_0000042631" description="Solute carrier family 52, riboflavin transporter, member 2">
    <location>
        <begin position="1"/>
        <end position="445"/>
    </location>
</feature>
<feature type="transmembrane region" description="Helical" evidence="1">
    <location>
        <begin position="14"/>
        <end position="34"/>
    </location>
</feature>
<feature type="transmembrane region" description="Helical" evidence="1">
    <location>
        <begin position="47"/>
        <end position="67"/>
    </location>
</feature>
<feature type="transmembrane region" description="Helical" evidence="1">
    <location>
        <begin position="86"/>
        <end position="106"/>
    </location>
</feature>
<feature type="transmembrane region" description="Helical" evidence="1">
    <location>
        <begin position="112"/>
        <end position="132"/>
    </location>
</feature>
<feature type="transmembrane region" description="Helical" evidence="1">
    <location>
        <begin position="147"/>
        <end position="167"/>
    </location>
</feature>
<feature type="transmembrane region" description="Helical" evidence="1">
    <location>
        <begin position="196"/>
        <end position="216"/>
    </location>
</feature>
<feature type="transmembrane region" description="Helical" evidence="1">
    <location>
        <begin position="277"/>
        <end position="297"/>
    </location>
</feature>
<feature type="transmembrane region" description="Helical" evidence="1">
    <location>
        <begin position="312"/>
        <end position="332"/>
    </location>
</feature>
<feature type="transmembrane region" description="Helical" evidence="1">
    <location>
        <begin position="339"/>
        <end position="359"/>
    </location>
</feature>
<feature type="transmembrane region" description="Helical" evidence="1">
    <location>
        <begin position="366"/>
        <end position="386"/>
    </location>
</feature>
<feature type="transmembrane region" description="Helical" evidence="1">
    <location>
        <begin position="404"/>
        <end position="424"/>
    </location>
</feature>
<feature type="region of interest" description="Disordered" evidence="2">
    <location>
        <begin position="228"/>
        <end position="264"/>
    </location>
</feature>
<feature type="compositionally biased region" description="Low complexity" evidence="2">
    <location>
        <begin position="247"/>
        <end position="258"/>
    </location>
</feature>
<feature type="sequence variant" id="VAR_077433" description="In BVVLS2; strong decrease in riboflavin transport; no effect on localization to plasma membrane; no effect on protein abundance; dbSNP:rs797045199." evidence="10">
    <original>W</original>
    <variation>S</variation>
    <location>
        <position position="31"/>
    </location>
</feature>
<feature type="sequence variant" id="VAR_077434" description="In BVVLS2; decreased riboflavin transport; dbSNP:rs397514657." evidence="9">
    <original>S</original>
    <variation>F</variation>
    <location>
        <position position="52"/>
    </location>
</feature>
<feature type="sequence variant" id="VAR_077435" description="In BVVLS2; strongly decreased riboflavin transport; dbSNP:rs397514538." evidence="8">
    <original>L</original>
    <variation>P</variation>
    <location>
        <position position="123"/>
    </location>
</feature>
<feature type="sequence variant" id="VAR_077436" description="In BVVLS2; decreased riboflavin transport; no effect on localization to plasma membrane; dbSNP:rs377740960." evidence="11">
    <original>P</original>
    <variation>T</variation>
    <location>
        <position position="141"/>
    </location>
</feature>
<feature type="sequence variant" id="VAR_077437" description="In BVVLS2; loss of riboflavin transport; loss of localization to plasma membrane; no effect on protein abundance; dbSNP:rs398123067." evidence="10">
    <original>A</original>
    <variation>D</variation>
    <location>
        <position position="284"/>
    </location>
</feature>
<feature type="sequence variant" id="VAR_077438" description="In BVVLS2; decreased riboflavin transport; decreased localization to plasma membrane; no effect on protein abundance; dbSNP:rs398123068." evidence="10">
    <original>Y</original>
    <variation>C</variation>
    <location>
        <position position="305"/>
    </location>
</feature>
<feature type="sequence variant" id="VAR_068694" description="In BVVLS2; decreased riboflavin transport; decreased localization to plasma membrane; no effect on protein abundance; dbSNP:rs398124641." evidence="7 10">
    <original>G</original>
    <variation>R</variation>
    <location>
        <position position="306"/>
    </location>
</feature>
<feature type="sequence variant" id="VAR_077439" description="In BVVLS2; decreased riboflavin transport; decreased localization to plasma membrane; no effect on protein abundance; dbSNP:rs754320812." evidence="10">
    <original>L</original>
    <variation>P</variation>
    <location>
        <position position="312"/>
    </location>
</feature>
<feature type="sequence variant" id="VAR_077440" description="In BVVLS2; loss of riboflavin transport; loss of localization to plasma membrane; no effect on protein abundance; dbSNP:rs148234606." evidence="8 10">
    <original>L</original>
    <variation>P</variation>
    <location>
        <position position="339"/>
    </location>
</feature>
<feature type="sequence variant" id="VAR_077441" description="In BVVLS2; decreased riboflavin transport; dbSNP:rs397514658." evidence="9">
    <original>G</original>
    <variation>S</variation>
    <location>
        <position position="419"/>
    </location>
</feature>
<feature type="sequence conflict" description="In Ref. 1; AAL59882." evidence="14" ref="1">
    <original>G</original>
    <variation>S</variation>
    <location>
        <position position="341"/>
    </location>
</feature>
<accession>Q9HAB3</accession>
<accession>A8K6B6</accession>
<accession>D3DWL8</accession>
<accession>G1UCY1</accession>
<accession>Q86UT1</accession>
<protein>
    <recommendedName>
        <fullName>Solute carrier family 52, riboflavin transporter, member 2</fullName>
    </recommendedName>
    <alternativeName>
        <fullName evidence="12">Porcine endogenous retrovirus A receptor 1</fullName>
        <shortName evidence="12">PERV-A receptor 1</shortName>
    </alternativeName>
    <alternativeName>
        <fullName>Protein GPR172A</fullName>
    </alternativeName>
    <alternativeName>
        <fullName>Riboflavin transporter 3</fullName>
        <shortName>hRFT3</shortName>
    </alternativeName>
</protein>
<name>S52A2_HUMAN</name>
<keyword id="KW-0002">3D-structure</keyword>
<keyword id="KW-1003">Cell membrane</keyword>
<keyword id="KW-0209">Deafness</keyword>
<keyword id="KW-0225">Disease variant</keyword>
<keyword id="KW-1183">Host cell receptor for virus entry</keyword>
<keyword id="KW-0472">Membrane</keyword>
<keyword id="KW-1267">Proteomics identification</keyword>
<keyword id="KW-0675">Receptor</keyword>
<keyword id="KW-1185">Reference proteome</keyword>
<keyword id="KW-0812">Transmembrane</keyword>
<keyword id="KW-1133">Transmembrane helix</keyword>
<keyword id="KW-0813">Transport</keyword>
<evidence type="ECO:0000255" key="1"/>
<evidence type="ECO:0000256" key="2">
    <source>
        <dbReference type="SAM" id="MobiDB-lite"/>
    </source>
</evidence>
<evidence type="ECO:0000269" key="3">
    <source>
    </source>
</evidence>
<evidence type="ECO:0000269" key="4">
    <source>
    </source>
</evidence>
<evidence type="ECO:0000269" key="5">
    <source>
    </source>
</evidence>
<evidence type="ECO:0000269" key="6">
    <source>
    </source>
</evidence>
<evidence type="ECO:0000269" key="7">
    <source>
    </source>
</evidence>
<evidence type="ECO:0000269" key="8">
    <source>
    </source>
</evidence>
<evidence type="ECO:0000269" key="9">
    <source>
    </source>
</evidence>
<evidence type="ECO:0000269" key="10">
    <source>
    </source>
</evidence>
<evidence type="ECO:0000269" key="11">
    <source>
    </source>
</evidence>
<evidence type="ECO:0000303" key="12">
    <source>
    </source>
</evidence>
<evidence type="ECO:0000303" key="13">
    <source>
    </source>
</evidence>
<evidence type="ECO:0000305" key="14"/>
<evidence type="ECO:0000305" key="15">
    <source>
    </source>
</evidence>